<accession>B7FX91</accession>
<reference evidence="7" key="1">
    <citation type="journal article" date="2008" name="Nature">
        <title>The Phaeodactylum genome reveals the evolutionary history of diatom genomes.</title>
        <authorList>
            <person name="Bowler C."/>
            <person name="Allen A.E."/>
            <person name="Badger J.H."/>
            <person name="Grimwood J."/>
            <person name="Jabbari K."/>
            <person name="Kuo A."/>
            <person name="Maheswari U."/>
            <person name="Martens C."/>
            <person name="Maumus F."/>
            <person name="Otillar R.P."/>
            <person name="Rayko E."/>
            <person name="Salamov A."/>
            <person name="Vandepoele K."/>
            <person name="Beszteri B."/>
            <person name="Gruber A."/>
            <person name="Heijde M."/>
            <person name="Katinka M."/>
            <person name="Mock T."/>
            <person name="Valentin K."/>
            <person name="Verret F."/>
            <person name="Berges J.A."/>
            <person name="Brownlee C."/>
            <person name="Cadoret J.P."/>
            <person name="Chiovitti A."/>
            <person name="Choi C.J."/>
            <person name="Coesel S."/>
            <person name="De Martino A."/>
            <person name="Detter J.C."/>
            <person name="Durkin C."/>
            <person name="Falciatore A."/>
            <person name="Fournet J."/>
            <person name="Haruta M."/>
            <person name="Huysman M.J."/>
            <person name="Jenkins B.D."/>
            <person name="Jiroutova K."/>
            <person name="Jorgensen R.E."/>
            <person name="Joubert Y."/>
            <person name="Kaplan A."/>
            <person name="Kroger N."/>
            <person name="Kroth P.G."/>
            <person name="La Roche J."/>
            <person name="Lindquist E."/>
            <person name="Lommer M."/>
            <person name="Martin-Jezequel V."/>
            <person name="Lopez P.J."/>
            <person name="Lucas S."/>
            <person name="Mangogna M."/>
            <person name="McGinnis K."/>
            <person name="Medlin L.K."/>
            <person name="Montsant A."/>
            <person name="Oudot-Le Secq M.P."/>
            <person name="Napoli C."/>
            <person name="Obornik M."/>
            <person name="Parker M.S."/>
            <person name="Petit J.L."/>
            <person name="Porcel B.M."/>
            <person name="Poulsen N."/>
            <person name="Robison M."/>
            <person name="Rychlewski L."/>
            <person name="Rynearson T.A."/>
            <person name="Schmutz J."/>
            <person name="Shapiro H."/>
            <person name="Siaut M."/>
            <person name="Stanley M."/>
            <person name="Sussman M.R."/>
            <person name="Taylor A.R."/>
            <person name="Vardi A."/>
            <person name="von Dassow P."/>
            <person name="Vyverman W."/>
            <person name="Willis A."/>
            <person name="Wyrwicz L.S."/>
            <person name="Rokhsar D.S."/>
            <person name="Weissenbach J."/>
            <person name="Armbrust E.V."/>
            <person name="Green B.R."/>
            <person name="Van de Peer Y."/>
            <person name="Grigoriev I.V."/>
        </authorList>
    </citation>
    <scope>NUCLEOTIDE SEQUENCE [LARGE SCALE GENOMIC DNA]</scope>
    <source>
        <strain evidence="7">CCAP 1055/1</strain>
    </source>
</reference>
<reference evidence="7" key="2">
    <citation type="submission" date="2008-08" db="EMBL/GenBank/DDBJ databases">
        <authorList>
            <consortium name="Diatom Consortium"/>
            <person name="Grigoriev I."/>
            <person name="Grimwood J."/>
            <person name="Kuo A."/>
            <person name="Otillar R.P."/>
            <person name="Salamov A."/>
            <person name="Detter J.C."/>
            <person name="Lindquist E."/>
            <person name="Shapiro H."/>
            <person name="Lucas S."/>
            <person name="Glavina del Rio T."/>
            <person name="Pitluck S."/>
            <person name="Rokhsar D."/>
            <person name="Bowler C."/>
        </authorList>
    </citation>
    <scope>GENOME REANNOTATION</scope>
    <source>
        <strain evidence="7">CCAP 1055/1</strain>
    </source>
</reference>
<reference evidence="5" key="3">
    <citation type="journal article" date="2017" name="EMBO J.">
        <title>The transcription factor bZIP14 regulates the TCA cycle in the diatom Phaeodactylum tricornutum.</title>
        <authorList>
            <person name="Matthijs M."/>
            <person name="Fabris M."/>
            <person name="Obata T."/>
            <person name="Foubert I."/>
            <person name="Franco-Zorrilla J.M."/>
            <person name="Solano R."/>
            <person name="Fernie A.R."/>
            <person name="Vyverman W."/>
            <person name="Goossens A."/>
        </authorList>
    </citation>
    <scope>FUNCTION</scope>
    <scope>INDUCTION</scope>
</reference>
<protein>
    <recommendedName>
        <fullName evidence="5">bZIP transcription factor 14</fullName>
    </recommendedName>
</protein>
<evidence type="ECO:0000255" key="1">
    <source>
        <dbReference type="PROSITE-ProRule" id="PRU00978"/>
    </source>
</evidence>
<evidence type="ECO:0000256" key="2">
    <source>
        <dbReference type="SAM" id="MobiDB-lite"/>
    </source>
</evidence>
<evidence type="ECO:0000269" key="3">
    <source>
    </source>
</evidence>
<evidence type="ECO:0000303" key="4">
    <source>
    </source>
</evidence>
<evidence type="ECO:0000305" key="5"/>
<evidence type="ECO:0000312" key="6">
    <source>
        <dbReference type="EMBL" id="EEC49336.1"/>
    </source>
</evidence>
<evidence type="ECO:0000312" key="7">
    <source>
        <dbReference type="Proteomes" id="UP000000759"/>
    </source>
</evidence>
<organism evidence="7">
    <name type="scientific">Phaeodactylum tricornutum (strain CCAP 1055/1)</name>
    <dbReference type="NCBI Taxonomy" id="556484"/>
    <lineage>
        <taxon>Eukaryota</taxon>
        <taxon>Sar</taxon>
        <taxon>Stramenopiles</taxon>
        <taxon>Ochrophyta</taxon>
        <taxon>Bacillariophyta</taxon>
        <taxon>Bacillariophyceae</taxon>
        <taxon>Bacillariophycidae</taxon>
        <taxon>Naviculales</taxon>
        <taxon>Phaeodactylaceae</taxon>
        <taxon>Phaeodactylum</taxon>
    </lineage>
</organism>
<dbReference type="EMBL" id="CM000609">
    <property type="protein sequence ID" value="EEC49336.1"/>
    <property type="molecule type" value="Genomic_DNA"/>
</dbReference>
<dbReference type="RefSeq" id="XP_002179513.1">
    <property type="nucleotide sequence ID" value="XM_002179477.1"/>
</dbReference>
<dbReference type="SMR" id="B7FX91"/>
<dbReference type="PaxDb" id="2850-Phatr45314"/>
<dbReference type="GeneID" id="7200016"/>
<dbReference type="KEGG" id="pti:PHATRDRAFT_45314"/>
<dbReference type="eggNOG" id="ENOG502S7C7">
    <property type="taxonomic scope" value="Eukaryota"/>
</dbReference>
<dbReference type="HOGENOM" id="CLU_777225_0_0_1"/>
<dbReference type="InParanoid" id="B7FX91"/>
<dbReference type="OrthoDB" id="47359at2759"/>
<dbReference type="Proteomes" id="UP000000759">
    <property type="component" value="Chromosome 6"/>
</dbReference>
<dbReference type="GO" id="GO:0005634">
    <property type="term" value="C:nucleus"/>
    <property type="evidence" value="ECO:0007669"/>
    <property type="project" value="UniProtKB-SubCell"/>
</dbReference>
<dbReference type="GO" id="GO:0003677">
    <property type="term" value="F:DNA binding"/>
    <property type="evidence" value="ECO:0000314"/>
    <property type="project" value="UniProtKB"/>
</dbReference>
<dbReference type="GO" id="GO:0000981">
    <property type="term" value="F:DNA-binding transcription factor activity, RNA polymerase II-specific"/>
    <property type="evidence" value="ECO:0007669"/>
    <property type="project" value="TreeGrafter"/>
</dbReference>
<dbReference type="GO" id="GO:0000978">
    <property type="term" value="F:RNA polymerase II cis-regulatory region sequence-specific DNA binding"/>
    <property type="evidence" value="ECO:0007669"/>
    <property type="project" value="TreeGrafter"/>
</dbReference>
<dbReference type="GO" id="GO:0006995">
    <property type="term" value="P:cellular response to nitrogen starvation"/>
    <property type="evidence" value="ECO:0000315"/>
    <property type="project" value="UniProtKB"/>
</dbReference>
<dbReference type="GO" id="GO:0010628">
    <property type="term" value="P:positive regulation of gene expression"/>
    <property type="evidence" value="ECO:0000315"/>
    <property type="project" value="UniProtKB"/>
</dbReference>
<dbReference type="CDD" id="cd14809">
    <property type="entry name" value="bZIP_AUREO-like"/>
    <property type="match status" value="2"/>
</dbReference>
<dbReference type="Gene3D" id="1.20.5.170">
    <property type="match status" value="2"/>
</dbReference>
<dbReference type="InterPro" id="IPR000837">
    <property type="entry name" value="AP-1"/>
</dbReference>
<dbReference type="InterPro" id="IPR004827">
    <property type="entry name" value="bZIP"/>
</dbReference>
<dbReference type="InterPro" id="IPR046347">
    <property type="entry name" value="bZIP_sf"/>
</dbReference>
<dbReference type="PANTHER" id="PTHR23351:SF24">
    <property type="entry name" value="ACTIVATING TRANSCRIPTION FACTOR 3-RELATED"/>
    <property type="match status" value="1"/>
</dbReference>
<dbReference type="PANTHER" id="PTHR23351">
    <property type="entry name" value="FOS TRANSCRIPTION FACTOR-RELATED"/>
    <property type="match status" value="1"/>
</dbReference>
<dbReference type="Pfam" id="PF00170">
    <property type="entry name" value="bZIP_1"/>
    <property type="match status" value="1"/>
</dbReference>
<dbReference type="Pfam" id="PF07716">
    <property type="entry name" value="bZIP_2"/>
    <property type="match status" value="1"/>
</dbReference>
<dbReference type="SMART" id="SM00338">
    <property type="entry name" value="BRLZ"/>
    <property type="match status" value="2"/>
</dbReference>
<dbReference type="SUPFAM" id="SSF57959">
    <property type="entry name" value="Leucine zipper domain"/>
    <property type="match status" value="2"/>
</dbReference>
<dbReference type="PROSITE" id="PS50217">
    <property type="entry name" value="BZIP"/>
    <property type="match status" value="2"/>
</dbReference>
<sequence>MRFPAASVAVDSTPQLRLLQMKDSHETYSTVQLVHSPLPEKGPNSVLVDVPQQISRRKPTAEQSFVSGSDSSRSSTKSSSGSRPVMTTTADPNIVTAASTESVSSSPKWLPKKADTDDRVQRSRERNRIHARKTRQRKKEQMQSLEGRATDLKHEQIRLKQIINEKNTANILVGLFSKGQSQSPNEDPRVEALMYRSVEEIPDPSKIPELPALILPGQHASKKIKVAVPVVAASPQSMSDGGGEEVASTSDVSGDEQQVPDDGIDYDLLGKDRSKCTPEELDQIRRERNRMHAKRTRDRKRIFTEEMAEMCRILEEENHLLRVHLGGLDSDFKSESTTTSTHVVDRIDSVLSTPTLASCAPPQDMVSVSLSPSQLPSKPSTKEVAFNQLQTLLDVAGSFERQQREAERKVPQMCSISAASDTSTSDSSHHHRQRRCHKGDSDRPVKRQRYQVPRSITTTTSLAAPVGW</sequence>
<proteinExistence type="evidence at transcript level"/>
<gene>
    <name evidence="4" type="primary">bZIP14</name>
    <name evidence="6" type="ORF">PHATRDRAFT_45314</name>
</gene>
<keyword id="KW-0010">Activator</keyword>
<keyword id="KW-0238">DNA-binding</keyword>
<keyword id="KW-0539">Nucleus</keyword>
<keyword id="KW-1185">Reference proteome</keyword>
<keyword id="KW-0804">Transcription</keyword>
<keyword id="KW-0805">Transcription regulation</keyword>
<name>BZP14_PHATC</name>
<feature type="chain" id="PRO_0000449325" description="bZIP transcription factor 14">
    <location>
        <begin position="1"/>
        <end position="468"/>
    </location>
</feature>
<feature type="domain" description="bZIP 1" evidence="1">
    <location>
        <begin position="117"/>
        <end position="165"/>
    </location>
</feature>
<feature type="domain" description="bZIP 2" evidence="1">
    <location>
        <begin position="279"/>
        <end position="333"/>
    </location>
</feature>
<feature type="region of interest" description="Disordered" evidence="2">
    <location>
        <begin position="55"/>
        <end position="149"/>
    </location>
</feature>
<feature type="region of interest" description="Basic motif 1" evidence="1">
    <location>
        <begin position="119"/>
        <end position="139"/>
    </location>
</feature>
<feature type="region of interest" description="Leucine-zipper 1" evidence="1">
    <location>
        <begin position="145"/>
        <end position="159"/>
    </location>
</feature>
<feature type="region of interest" description="Disordered" evidence="2">
    <location>
        <begin position="234"/>
        <end position="272"/>
    </location>
</feature>
<feature type="region of interest" description="Basic motif 2" evidence="1">
    <location>
        <begin position="285"/>
        <end position="312"/>
    </location>
</feature>
<feature type="region of interest" description="Leucine-zipper 2" evidence="1">
    <location>
        <begin position="313"/>
        <end position="320"/>
    </location>
</feature>
<feature type="region of interest" description="Disordered" evidence="2">
    <location>
        <begin position="400"/>
        <end position="468"/>
    </location>
</feature>
<feature type="compositionally biased region" description="Low complexity" evidence="2">
    <location>
        <begin position="64"/>
        <end position="82"/>
    </location>
</feature>
<feature type="compositionally biased region" description="Low complexity" evidence="2">
    <location>
        <begin position="95"/>
        <end position="106"/>
    </location>
</feature>
<feature type="compositionally biased region" description="Basic and acidic residues" evidence="2">
    <location>
        <begin position="112"/>
        <end position="128"/>
    </location>
</feature>
<feature type="compositionally biased region" description="Basic residues" evidence="2">
    <location>
        <begin position="129"/>
        <end position="138"/>
    </location>
</feature>
<feature type="compositionally biased region" description="Polar residues" evidence="2">
    <location>
        <begin position="247"/>
        <end position="256"/>
    </location>
</feature>
<feature type="compositionally biased region" description="Basic and acidic residues" evidence="2">
    <location>
        <begin position="401"/>
        <end position="410"/>
    </location>
</feature>
<feature type="compositionally biased region" description="Low complexity" evidence="2">
    <location>
        <begin position="417"/>
        <end position="426"/>
    </location>
</feature>
<comment type="function">
    <text evidence="3">Transcriptional activator which binds to the C-box-like motif 5'-TGACGT-3' and A-box-like motif 5'-GTACGTA-3' of target promoters to positively regulate the expression of genes involved in the tricarboxylic acid (TCA) cycle in response to nitrogen starvation (PubMed:28420744). May also regulate the TCA cycle during day-to-night transitions (PubMed:28420744).</text>
</comment>
<comment type="subcellular location">
    <subcellularLocation>
        <location evidence="1">Nucleus</location>
    </subcellularLocation>
</comment>
<comment type="induction">
    <text evidence="3">By nitrogen deficiency.</text>
</comment>
<comment type="similarity">
    <text evidence="5">Belongs to the bZIP family.</text>
</comment>